<protein>
    <recommendedName>
        <fullName>Reticuline oxidase</fullName>
        <ecNumber>1.21.3.3</ecNumber>
    </recommendedName>
    <alternativeName>
        <fullName>Berberine bridge-forming enzyme</fullName>
        <shortName>BBE</shortName>
    </alternativeName>
    <alternativeName>
        <fullName>Tetrahydroprotoberberine synthase</fullName>
    </alternativeName>
</protein>
<comment type="function">
    <text evidence="7">Oxygen-dependent FAD-dependent oxidoreductase essential to the formation of benzophenanthridine alkaloids in the response of plants to pathogenic attack (PubMed:8972604). Catalyzes the stereospecific conversion of the N-methyl moiety of (S)-reticuline into the berberine bridge carbon of (S)-scoulerine. Involved in the biosynthesis of sanguinarine (PubMed:8972604).</text>
</comment>
<comment type="catalytic activity">
    <reaction evidence="8">
        <text>(S)-reticuline + O2 = (S)-scoulerine + H2O2 + H(+)</text>
        <dbReference type="Rhea" id="RHEA:19885"/>
        <dbReference type="ChEBI" id="CHEBI:15378"/>
        <dbReference type="ChEBI" id="CHEBI:15379"/>
        <dbReference type="ChEBI" id="CHEBI:16240"/>
        <dbReference type="ChEBI" id="CHEBI:17129"/>
        <dbReference type="ChEBI" id="CHEBI:57873"/>
        <dbReference type="EC" id="1.21.3.3"/>
    </reaction>
</comment>
<comment type="cofactor">
    <cofactor evidence="1">
        <name>FAD</name>
        <dbReference type="ChEBI" id="CHEBI:57692"/>
    </cofactor>
    <text evidence="1">Binds 1 FAD per subunit in a bicovalent manner.</text>
</comment>
<comment type="cofactor">
    <cofactor evidence="1">
        <name>a metal cation</name>
        <dbReference type="ChEBI" id="CHEBI:25213"/>
    </cofactor>
</comment>
<comment type="pathway">
    <text>Alkaloid biosynthesis; (S)-scoulerine biosynthesis; (S)-scoulerine from (S)-reticuline: step 1/1.</text>
</comment>
<comment type="subcellular location">
    <subcellularLocation>
        <location evidence="9">Cytoplasmic vesicle</location>
    </subcellularLocation>
    <text evidence="4">Localized to the parietal region of the sieve element cytoplasm.</text>
</comment>
<comment type="tissue specificity">
    <text evidence="4 5 7">Expressed in roots and stems (PubMed:14508000, PubMed:15353584, PubMed:8972604). Not detected in leaves or reproductive organs (PubMed:8972604). Restricted to the parietal region of sieve elements adjacent or proximal to laticifers (PubMed:14508000).</text>
</comment>
<comment type="developmental stage">
    <text evidence="6 7">Transiently induced 3 days after seed imbibition (PubMed:8972604). Increases rapidly between 1 and 3 days after seed germination (PubMed:16813579).</text>
</comment>
<comment type="induction">
    <text evidence="7">Up-regulated upon fungal elicitor treatment and by methyl jasmonate.</text>
</comment>
<comment type="PTM">
    <text evidence="1">The FAD cofactor is bound via a bicovalent 6-S-cysteinyl, 8alpha-N1-histidyl FAD linkage.</text>
</comment>
<comment type="similarity">
    <text evidence="8">Belongs to the oxygen-dependent FAD-linked oxidoreductase family.</text>
</comment>
<accession>P93479</accession>
<sequence length="535" mass="59903">MMCRSLTLRFFLFIVLLQTCVRGGDVNDNLLSSCLNSHGVHNFTTLSTDTNSDYFKLLHASMQNPLFAKPTVSKPSFIVMPGSKEELSSTVHCCTRESWTIRLRSGGHSYEGLSYTADTPFVIVDMMNLNRISIDVLSETAWVESGATLGELYYAIAQSTDTLGFTAGWCPTVGSGGHISGGGFGMMSRKYGLAADNVVDAILIDSNGAILDREKMGDDVFWAIRGGGGGVWGAIYAWKIKLLPVPEKLTVFRVTKNVGIEDASSLLHKWQYVADELDEDFTVSVLGGVNGNDAWLMFLGLHLGRKDAAKTIIDEKFPELGLVDKEFQEMSWGESMAFLSGLDTISELNNRFLKFDERAFKTKVDFTKVSVPLNVFRHALEMLSEQPGGFIALNGFGGKMSEISTDFTPFPHRKGTKLMFEYIIAWNQDEESKIGEFSEWLAKFYDYLEPFVSKEPRVGYVNHIDLDIGGIDWRNKSSTTNAVEIARNWGERYFSSNYERLVKAKTLIDPNNVFNHPQSIPPMMKFEEIYMLKEL</sequence>
<proteinExistence type="evidence at transcript level"/>
<organism>
    <name type="scientific">Papaver somniferum</name>
    <name type="common">Opium poppy</name>
    <dbReference type="NCBI Taxonomy" id="3469"/>
    <lineage>
        <taxon>Eukaryota</taxon>
        <taxon>Viridiplantae</taxon>
        <taxon>Streptophyta</taxon>
        <taxon>Embryophyta</taxon>
        <taxon>Tracheophyta</taxon>
        <taxon>Spermatophyta</taxon>
        <taxon>Magnoliopsida</taxon>
        <taxon>Ranunculales</taxon>
        <taxon>Papaveraceae</taxon>
        <taxon>Papaveroideae</taxon>
        <taxon>Papaver</taxon>
    </lineage>
</organism>
<reference key="1">
    <citation type="journal article" date="1996" name="Plant Physiol.">
        <title>Molecular characterization of berberine bridge enzyme genes from opium poppy.</title>
        <authorList>
            <person name="Facchini P.J."/>
            <person name="Penzes C."/>
            <person name="Johnson A.G."/>
            <person name="Bull D."/>
        </authorList>
    </citation>
    <scope>NUCLEOTIDE SEQUENCE [GENOMIC DNA]</scope>
    <scope>FUNCTION</scope>
    <scope>TISSUE SPECIFICITY</scope>
    <scope>DEVELOPMENTAL STAGE</scope>
    <scope>INDUCTION BY ELICITOR AND METHYL JASMONATE</scope>
    <source>
        <strain>cv. Marianne</strain>
    </source>
</reference>
<reference key="2">
    <citation type="journal article" date="2003" name="Plant Cell">
        <title>A tale of three cell types: alkaloid biosynthesis is localized to sieve elements in opium poppy.</title>
        <authorList>
            <person name="Bird D.A."/>
            <person name="Franceschi V.R."/>
            <person name="Facchini P.J."/>
        </authorList>
    </citation>
    <scope>TISSUE SPECIFICITY</scope>
    <scope>SUBCELLULAR LOCATION</scope>
</reference>
<reference key="3">
    <citation type="journal article" date="2004" name="Proc. Natl. Acad. Sci. U.S.A.">
        <title>The roles of latex and the vascular bundle in morphine biosynthesis in the opium poppy, Papaver somniferum.</title>
        <authorList>
            <person name="Weid M."/>
            <person name="Ziegler J."/>
            <person name="Kutchan T.M."/>
        </authorList>
    </citation>
    <scope>TISSUE SPECIFICITY</scope>
</reference>
<reference key="4">
    <citation type="journal article" date="2006" name="Plant J.">
        <title>The role of phloem sieve elements and laticifers in the biosynthesis and accumulation of alkaloids in opium poppy.</title>
        <authorList>
            <person name="Samanani N."/>
            <person name="Alcantara J."/>
            <person name="Bourgault R."/>
            <person name="Zulak K.G."/>
            <person name="Facchini P.J."/>
        </authorList>
    </citation>
    <scope>DEVELOPMENTAL STAGE</scope>
    <source>
        <strain>cv. Louisiana</strain>
        <strain>cv. Marianne</strain>
    </source>
</reference>
<feature type="signal peptide" evidence="2">
    <location>
        <begin position="1"/>
        <end position="23"/>
    </location>
</feature>
<feature type="chain" id="PRO_0000020426" description="Reticuline oxidase">
    <location>
        <begin position="24"/>
        <end position="535"/>
    </location>
</feature>
<feature type="domain" description="FAD-binding PCMH-type" evidence="3">
    <location>
        <begin position="71"/>
        <end position="245"/>
    </location>
</feature>
<feature type="glycosylation site" description="N-linked (GlcNAc...) asparagine" evidence="2">
    <location>
        <position position="42"/>
    </location>
</feature>
<feature type="glycosylation site" description="N-linked (GlcNAc...) asparagine" evidence="2">
    <location>
        <position position="475"/>
    </location>
</feature>
<feature type="cross-link" description="6-(S-cysteinyl)-8alpha-(pros-histidyl)-FAD (His-Cys)" evidence="1">
    <location>
        <begin position="108"/>
        <end position="170"/>
    </location>
</feature>
<keyword id="KW-0017">Alkaloid metabolism</keyword>
<keyword id="KW-0968">Cytoplasmic vesicle</keyword>
<keyword id="KW-0274">FAD</keyword>
<keyword id="KW-0285">Flavoprotein</keyword>
<keyword id="KW-0325">Glycoprotein</keyword>
<keyword id="KW-0560">Oxidoreductase</keyword>
<keyword id="KW-0732">Signal</keyword>
<dbReference type="EC" id="1.21.3.3"/>
<dbReference type="EMBL" id="AF025430">
    <property type="protein sequence ID" value="AAC61839.1"/>
    <property type="molecule type" value="Genomic_DNA"/>
</dbReference>
<dbReference type="PIR" id="T07969">
    <property type="entry name" value="T07969"/>
</dbReference>
<dbReference type="SMR" id="P93479"/>
<dbReference type="CAZy" id="AA7">
    <property type="family name" value="Auxiliary Activities 7"/>
</dbReference>
<dbReference type="GlyCosmos" id="P93479">
    <property type="glycosylation" value="2 sites, No reported glycans"/>
</dbReference>
<dbReference type="KEGG" id="ag:AAC61839"/>
<dbReference type="OrthoDB" id="407275at2759"/>
<dbReference type="BioCyc" id="MetaCyc:MONOMER-20626"/>
<dbReference type="BRENDA" id="1.21.3.3">
    <property type="organism ID" value="4515"/>
</dbReference>
<dbReference type="UniPathway" id="UPA00319">
    <property type="reaction ID" value="UER00450"/>
</dbReference>
<dbReference type="GO" id="GO:0031410">
    <property type="term" value="C:cytoplasmic vesicle"/>
    <property type="evidence" value="ECO:0007669"/>
    <property type="project" value="UniProtKB-KW"/>
</dbReference>
<dbReference type="GO" id="GO:0071949">
    <property type="term" value="F:FAD binding"/>
    <property type="evidence" value="ECO:0007669"/>
    <property type="project" value="InterPro"/>
</dbReference>
<dbReference type="GO" id="GO:0050468">
    <property type="term" value="F:reticuline oxidase activity"/>
    <property type="evidence" value="ECO:0007669"/>
    <property type="project" value="UniProtKB-EC"/>
</dbReference>
<dbReference type="GO" id="GO:0009820">
    <property type="term" value="P:alkaloid metabolic process"/>
    <property type="evidence" value="ECO:0007669"/>
    <property type="project" value="UniProtKB-KW"/>
</dbReference>
<dbReference type="Gene3D" id="3.30.465.10">
    <property type="match status" value="1"/>
</dbReference>
<dbReference type="Gene3D" id="3.40.462.20">
    <property type="match status" value="1"/>
</dbReference>
<dbReference type="Gene3D" id="3.30.43.10">
    <property type="entry name" value="Uridine Diphospho-n-acetylenolpyruvylglucosamine Reductase, domain 2"/>
    <property type="match status" value="1"/>
</dbReference>
<dbReference type="InterPro" id="IPR012951">
    <property type="entry name" value="BBE"/>
</dbReference>
<dbReference type="InterPro" id="IPR016166">
    <property type="entry name" value="FAD-bd_PCMH"/>
</dbReference>
<dbReference type="InterPro" id="IPR036318">
    <property type="entry name" value="FAD-bd_PCMH-like_sf"/>
</dbReference>
<dbReference type="InterPro" id="IPR016167">
    <property type="entry name" value="FAD-bd_PCMH_sub1"/>
</dbReference>
<dbReference type="InterPro" id="IPR016169">
    <property type="entry name" value="FAD-bd_PCMH_sub2"/>
</dbReference>
<dbReference type="InterPro" id="IPR006094">
    <property type="entry name" value="Oxid_FAD_bind_N"/>
</dbReference>
<dbReference type="InterPro" id="IPR006093">
    <property type="entry name" value="Oxy_OxRdtase_FAD_BS"/>
</dbReference>
<dbReference type="PANTHER" id="PTHR32448">
    <property type="entry name" value="OS08G0158400 PROTEIN"/>
    <property type="match status" value="1"/>
</dbReference>
<dbReference type="Pfam" id="PF08031">
    <property type="entry name" value="BBE"/>
    <property type="match status" value="1"/>
</dbReference>
<dbReference type="Pfam" id="PF01565">
    <property type="entry name" value="FAD_binding_4"/>
    <property type="match status" value="1"/>
</dbReference>
<dbReference type="SUPFAM" id="SSF56176">
    <property type="entry name" value="FAD-binding/transporter-associated domain-like"/>
    <property type="match status" value="1"/>
</dbReference>
<dbReference type="PROSITE" id="PS51387">
    <property type="entry name" value="FAD_PCMH"/>
    <property type="match status" value="1"/>
</dbReference>
<dbReference type="PROSITE" id="PS00862">
    <property type="entry name" value="OX2_COVAL_FAD"/>
    <property type="match status" value="1"/>
</dbReference>
<evidence type="ECO:0000250" key="1">
    <source>
        <dbReference type="UniProtKB" id="P30986"/>
    </source>
</evidence>
<evidence type="ECO:0000255" key="2"/>
<evidence type="ECO:0000255" key="3">
    <source>
        <dbReference type="PROSITE-ProRule" id="PRU00718"/>
    </source>
</evidence>
<evidence type="ECO:0000269" key="4">
    <source>
    </source>
</evidence>
<evidence type="ECO:0000269" key="5">
    <source>
    </source>
</evidence>
<evidence type="ECO:0000269" key="6">
    <source>
    </source>
</evidence>
<evidence type="ECO:0000269" key="7">
    <source>
    </source>
</evidence>
<evidence type="ECO:0000305" key="8"/>
<evidence type="ECO:0000305" key="9">
    <source>
    </source>
</evidence>
<gene>
    <name type="primary">BBE1</name>
</gene>
<name>RETO_PAPSO</name>